<protein>
    <recommendedName>
        <fullName evidence="1">UDP-N-acetylenolpyruvoylglucosamine reductase</fullName>
        <ecNumber evidence="1">1.3.1.98</ecNumber>
    </recommendedName>
    <alternativeName>
        <fullName evidence="1">UDP-N-acetylmuramate dehydrogenase</fullName>
    </alternativeName>
</protein>
<accession>Q3SMH1</accession>
<name>MURB_THIDA</name>
<gene>
    <name evidence="1" type="primary">murB</name>
    <name type="ordered locus">Tbd_0121</name>
</gene>
<sequence>MRHDYRMSEVEVAGGTAPVLRGRFLYNEPMSRHVSWRAGGSARRLYVPADLEDLVWLVRSVPADEAIHMVGLGSNLLVRDGGVAGVVILLHGVLTKLALESRTHGLPPAPPARDTAVVYAQAGVASPKLARFAATHGLVGGEFLAGIPGTVGGAIAMNAGCYGSETWDTLVQLHTLDRQGQLNERLPEEYVTGYRHAALKRPHEEWFIGGWFRLERGDGAASRERIRSLLKTRIASQPLNLPNAGSVFRNPPGDFAARLIEACGLKGHRIGDAQVSTKHANFIVNVGKATATDIERLIEHVEDSVEARTNVRLMREVRIIGERQ</sequence>
<organism>
    <name type="scientific">Thiobacillus denitrificans (strain ATCC 25259 / T1)</name>
    <dbReference type="NCBI Taxonomy" id="292415"/>
    <lineage>
        <taxon>Bacteria</taxon>
        <taxon>Pseudomonadati</taxon>
        <taxon>Pseudomonadota</taxon>
        <taxon>Betaproteobacteria</taxon>
        <taxon>Nitrosomonadales</taxon>
        <taxon>Thiobacillaceae</taxon>
        <taxon>Thiobacillus</taxon>
    </lineage>
</organism>
<proteinExistence type="inferred from homology"/>
<keyword id="KW-0131">Cell cycle</keyword>
<keyword id="KW-0132">Cell division</keyword>
<keyword id="KW-0133">Cell shape</keyword>
<keyword id="KW-0961">Cell wall biogenesis/degradation</keyword>
<keyword id="KW-0963">Cytoplasm</keyword>
<keyword id="KW-0274">FAD</keyword>
<keyword id="KW-0285">Flavoprotein</keyword>
<keyword id="KW-0521">NADP</keyword>
<keyword id="KW-0560">Oxidoreductase</keyword>
<keyword id="KW-0573">Peptidoglycan synthesis</keyword>
<keyword id="KW-1185">Reference proteome</keyword>
<evidence type="ECO:0000255" key="1">
    <source>
        <dbReference type="HAMAP-Rule" id="MF_00037"/>
    </source>
</evidence>
<dbReference type="EC" id="1.3.1.98" evidence="1"/>
<dbReference type="EMBL" id="CP000116">
    <property type="protein sequence ID" value="AAZ96074.1"/>
    <property type="molecule type" value="Genomic_DNA"/>
</dbReference>
<dbReference type="RefSeq" id="WP_011310634.1">
    <property type="nucleotide sequence ID" value="NC_007404.1"/>
</dbReference>
<dbReference type="SMR" id="Q3SMH1"/>
<dbReference type="STRING" id="292415.Tbd_0121"/>
<dbReference type="KEGG" id="tbd:Tbd_0121"/>
<dbReference type="eggNOG" id="COG0812">
    <property type="taxonomic scope" value="Bacteria"/>
</dbReference>
<dbReference type="HOGENOM" id="CLU_035304_1_1_4"/>
<dbReference type="OrthoDB" id="9804753at2"/>
<dbReference type="UniPathway" id="UPA00219"/>
<dbReference type="Proteomes" id="UP000008291">
    <property type="component" value="Chromosome"/>
</dbReference>
<dbReference type="GO" id="GO:0005829">
    <property type="term" value="C:cytosol"/>
    <property type="evidence" value="ECO:0007669"/>
    <property type="project" value="TreeGrafter"/>
</dbReference>
<dbReference type="GO" id="GO:0071949">
    <property type="term" value="F:FAD binding"/>
    <property type="evidence" value="ECO:0007669"/>
    <property type="project" value="InterPro"/>
</dbReference>
<dbReference type="GO" id="GO:0008762">
    <property type="term" value="F:UDP-N-acetylmuramate dehydrogenase activity"/>
    <property type="evidence" value="ECO:0007669"/>
    <property type="project" value="UniProtKB-UniRule"/>
</dbReference>
<dbReference type="GO" id="GO:0051301">
    <property type="term" value="P:cell division"/>
    <property type="evidence" value="ECO:0007669"/>
    <property type="project" value="UniProtKB-KW"/>
</dbReference>
<dbReference type="GO" id="GO:0071555">
    <property type="term" value="P:cell wall organization"/>
    <property type="evidence" value="ECO:0007669"/>
    <property type="project" value="UniProtKB-KW"/>
</dbReference>
<dbReference type="GO" id="GO:0009252">
    <property type="term" value="P:peptidoglycan biosynthetic process"/>
    <property type="evidence" value="ECO:0007669"/>
    <property type="project" value="UniProtKB-UniRule"/>
</dbReference>
<dbReference type="GO" id="GO:0008360">
    <property type="term" value="P:regulation of cell shape"/>
    <property type="evidence" value="ECO:0007669"/>
    <property type="project" value="UniProtKB-KW"/>
</dbReference>
<dbReference type="Gene3D" id="3.30.465.10">
    <property type="match status" value="1"/>
</dbReference>
<dbReference type="Gene3D" id="3.90.78.10">
    <property type="entry name" value="UDP-N-acetylenolpyruvoylglucosamine reductase, C-terminal domain"/>
    <property type="match status" value="1"/>
</dbReference>
<dbReference type="Gene3D" id="3.30.43.10">
    <property type="entry name" value="Uridine Diphospho-n-acetylenolpyruvylglucosamine Reductase, domain 2"/>
    <property type="match status" value="1"/>
</dbReference>
<dbReference type="HAMAP" id="MF_00037">
    <property type="entry name" value="MurB"/>
    <property type="match status" value="1"/>
</dbReference>
<dbReference type="InterPro" id="IPR016166">
    <property type="entry name" value="FAD-bd_PCMH"/>
</dbReference>
<dbReference type="InterPro" id="IPR036318">
    <property type="entry name" value="FAD-bd_PCMH-like_sf"/>
</dbReference>
<dbReference type="InterPro" id="IPR016167">
    <property type="entry name" value="FAD-bd_PCMH_sub1"/>
</dbReference>
<dbReference type="InterPro" id="IPR016169">
    <property type="entry name" value="FAD-bd_PCMH_sub2"/>
</dbReference>
<dbReference type="InterPro" id="IPR003170">
    <property type="entry name" value="MurB"/>
</dbReference>
<dbReference type="InterPro" id="IPR011601">
    <property type="entry name" value="MurB_C"/>
</dbReference>
<dbReference type="InterPro" id="IPR036635">
    <property type="entry name" value="MurB_C_sf"/>
</dbReference>
<dbReference type="InterPro" id="IPR006094">
    <property type="entry name" value="Oxid_FAD_bind_N"/>
</dbReference>
<dbReference type="NCBIfam" id="TIGR00179">
    <property type="entry name" value="murB"/>
    <property type="match status" value="1"/>
</dbReference>
<dbReference type="NCBIfam" id="NF010480">
    <property type="entry name" value="PRK13905.1"/>
    <property type="match status" value="1"/>
</dbReference>
<dbReference type="PANTHER" id="PTHR21071">
    <property type="entry name" value="UDP-N-ACETYLENOLPYRUVOYLGLUCOSAMINE REDUCTASE"/>
    <property type="match status" value="1"/>
</dbReference>
<dbReference type="PANTHER" id="PTHR21071:SF4">
    <property type="entry name" value="UDP-N-ACETYLENOLPYRUVOYLGLUCOSAMINE REDUCTASE"/>
    <property type="match status" value="1"/>
</dbReference>
<dbReference type="Pfam" id="PF01565">
    <property type="entry name" value="FAD_binding_4"/>
    <property type="match status" value="1"/>
</dbReference>
<dbReference type="Pfam" id="PF02873">
    <property type="entry name" value="MurB_C"/>
    <property type="match status" value="1"/>
</dbReference>
<dbReference type="SUPFAM" id="SSF56176">
    <property type="entry name" value="FAD-binding/transporter-associated domain-like"/>
    <property type="match status" value="1"/>
</dbReference>
<dbReference type="SUPFAM" id="SSF56194">
    <property type="entry name" value="Uridine diphospho-N-Acetylenolpyruvylglucosamine reductase, MurB, C-terminal domain"/>
    <property type="match status" value="1"/>
</dbReference>
<dbReference type="PROSITE" id="PS51387">
    <property type="entry name" value="FAD_PCMH"/>
    <property type="match status" value="1"/>
</dbReference>
<comment type="function">
    <text evidence="1">Cell wall formation.</text>
</comment>
<comment type="catalytic activity">
    <reaction evidence="1">
        <text>UDP-N-acetyl-alpha-D-muramate + NADP(+) = UDP-N-acetyl-3-O-(1-carboxyvinyl)-alpha-D-glucosamine + NADPH + H(+)</text>
        <dbReference type="Rhea" id="RHEA:12248"/>
        <dbReference type="ChEBI" id="CHEBI:15378"/>
        <dbReference type="ChEBI" id="CHEBI:57783"/>
        <dbReference type="ChEBI" id="CHEBI:58349"/>
        <dbReference type="ChEBI" id="CHEBI:68483"/>
        <dbReference type="ChEBI" id="CHEBI:70757"/>
        <dbReference type="EC" id="1.3.1.98"/>
    </reaction>
</comment>
<comment type="cofactor">
    <cofactor evidence="1">
        <name>FAD</name>
        <dbReference type="ChEBI" id="CHEBI:57692"/>
    </cofactor>
</comment>
<comment type="pathway">
    <text evidence="1">Cell wall biogenesis; peptidoglycan biosynthesis.</text>
</comment>
<comment type="subcellular location">
    <subcellularLocation>
        <location evidence="1">Cytoplasm</location>
    </subcellularLocation>
</comment>
<comment type="similarity">
    <text evidence="1">Belongs to the MurB family.</text>
</comment>
<reference key="1">
    <citation type="journal article" date="2006" name="J. Bacteriol.">
        <title>The genome sequence of the obligately chemolithoautotrophic, facultatively anaerobic bacterium Thiobacillus denitrificans.</title>
        <authorList>
            <person name="Beller H.R."/>
            <person name="Chain P.S."/>
            <person name="Letain T.E."/>
            <person name="Chakicherla A."/>
            <person name="Larimer F.W."/>
            <person name="Richardson P.M."/>
            <person name="Coleman M.A."/>
            <person name="Wood A.P."/>
            <person name="Kelly D.P."/>
        </authorList>
    </citation>
    <scope>NUCLEOTIDE SEQUENCE [LARGE SCALE GENOMIC DNA]</scope>
    <source>
        <strain>ATCC 25259 / T1</strain>
    </source>
</reference>
<feature type="chain" id="PRO_0000224734" description="UDP-N-acetylenolpyruvoylglucosamine reductase">
    <location>
        <begin position="1"/>
        <end position="324"/>
    </location>
</feature>
<feature type="domain" description="FAD-binding PCMH-type" evidence="1">
    <location>
        <begin position="38"/>
        <end position="231"/>
    </location>
</feature>
<feature type="active site" evidence="1">
    <location>
        <position position="195"/>
    </location>
</feature>
<feature type="active site" description="Proton donor" evidence="1">
    <location>
        <position position="246"/>
    </location>
</feature>
<feature type="active site" evidence="1">
    <location>
        <position position="316"/>
    </location>
</feature>